<feature type="signal peptide" evidence="2">
    <location>
        <begin position="1"/>
        <end position="27"/>
    </location>
</feature>
<feature type="chain" id="PRO_0000386578" description="Protein cueball" evidence="2">
    <location>
        <begin position="28"/>
        <end position="636"/>
    </location>
</feature>
<feature type="topological domain" description="Extracellular" evidence="2">
    <location>
        <begin position="28"/>
        <end position="517"/>
    </location>
</feature>
<feature type="transmembrane region" description="Helical" evidence="2">
    <location>
        <begin position="518"/>
        <end position="538"/>
    </location>
</feature>
<feature type="topological domain" description="Cytoplasmic" evidence="2">
    <location>
        <begin position="539"/>
        <end position="636"/>
    </location>
</feature>
<feature type="repeat" description="LDL-receptor class B 1" evidence="2">
    <location>
        <begin position="122"/>
        <end position="169"/>
    </location>
</feature>
<feature type="repeat" description="LDL-receptor class B 2" evidence="2">
    <location>
        <begin position="170"/>
        <end position="214"/>
    </location>
</feature>
<feature type="repeat" description="LDL-receptor class B 3" evidence="2">
    <location>
        <begin position="215"/>
        <end position="260"/>
    </location>
</feature>
<feature type="domain" description="EGF-like 1" evidence="3">
    <location>
        <begin position="350"/>
        <end position="384"/>
    </location>
</feature>
<feature type="domain" description="EGF-like 2" evidence="3">
    <location>
        <begin position="419"/>
        <end position="456"/>
    </location>
</feature>
<feature type="glycosylation site" description="N-linked (GlcNAc...) asparagine" evidence="2">
    <location>
        <position position="83"/>
    </location>
</feature>
<feature type="glycosylation site" description="N-linked (GlcNAc...) asparagine" evidence="2">
    <location>
        <position position="109"/>
    </location>
</feature>
<feature type="glycosylation site" description="N-linked (GlcNAc...) asparagine" evidence="2">
    <location>
        <position position="190"/>
    </location>
</feature>
<feature type="glycosylation site" description="N-linked (GlcNAc...) asparagine" evidence="2">
    <location>
        <position position="285"/>
    </location>
</feature>
<feature type="glycosylation site" description="N-linked (GlcNAc...) asparagine" evidence="2">
    <location>
        <position position="339"/>
    </location>
</feature>
<feature type="glycosylation site" description="N-linked (GlcNAc...) asparagine" evidence="2">
    <location>
        <position position="449"/>
    </location>
</feature>
<feature type="glycosylation site" description="N-linked (GlcNAc...) asparagine" evidence="2">
    <location>
        <position position="458"/>
    </location>
</feature>
<feature type="glycosylation site" description="N-linked (GlcNAc...) asparagine" evidence="2">
    <location>
        <position position="493"/>
    </location>
</feature>
<feature type="disulfide bond" evidence="3">
    <location>
        <begin position="359"/>
        <end position="372"/>
    </location>
</feature>
<feature type="disulfide bond" evidence="3">
    <location>
        <begin position="374"/>
        <end position="383"/>
    </location>
</feature>
<feature type="disulfide bond" evidence="3">
    <location>
        <begin position="423"/>
        <end position="433"/>
    </location>
</feature>
<feature type="disulfide bond" evidence="3">
    <location>
        <begin position="427"/>
        <end position="444"/>
    </location>
</feature>
<feature type="disulfide bond" evidence="3">
    <location>
        <begin position="446"/>
        <end position="455"/>
    </location>
</feature>
<accession>B4LCX4</accession>
<organism>
    <name type="scientific">Drosophila virilis</name>
    <name type="common">Fruit fly</name>
    <dbReference type="NCBI Taxonomy" id="7244"/>
    <lineage>
        <taxon>Eukaryota</taxon>
        <taxon>Metazoa</taxon>
        <taxon>Ecdysozoa</taxon>
        <taxon>Arthropoda</taxon>
        <taxon>Hexapoda</taxon>
        <taxon>Insecta</taxon>
        <taxon>Pterygota</taxon>
        <taxon>Neoptera</taxon>
        <taxon>Endopterygota</taxon>
        <taxon>Diptera</taxon>
        <taxon>Brachycera</taxon>
        <taxon>Muscomorpha</taxon>
        <taxon>Ephydroidea</taxon>
        <taxon>Drosophilidae</taxon>
        <taxon>Drosophila</taxon>
    </lineage>
</organism>
<gene>
    <name evidence="1" type="primary">cue</name>
    <name type="ORF">GJ12465</name>
</gene>
<comment type="function">
    <text evidence="1">Has a role in spermatogenesis and oogenesis.</text>
</comment>
<comment type="subcellular location">
    <subcellularLocation>
        <location evidence="4">Cell membrane</location>
        <topology evidence="4">Single-pass type I membrane protein</topology>
    </subcellularLocation>
</comment>
<comment type="similarity">
    <text evidence="4">Belongs to the cueball family.</text>
</comment>
<evidence type="ECO:0000250" key="1">
    <source>
        <dbReference type="UniProtKB" id="Q95RU0"/>
    </source>
</evidence>
<evidence type="ECO:0000255" key="2"/>
<evidence type="ECO:0000255" key="3">
    <source>
        <dbReference type="PROSITE-ProRule" id="PRU00076"/>
    </source>
</evidence>
<evidence type="ECO:0000305" key="4"/>
<evidence type="ECO:0000312" key="5">
    <source>
        <dbReference type="EMBL" id="EDW68835.1"/>
    </source>
</evidence>
<sequence>MKLCTSQQFGVAVLFIVLNICSPLADASPIAWDFAVTLRDKILFVDNRWRTIGSAAHEFEELSALAFDEAEELIYFNDQQHQNGSIFSLRRDATVASHIVEQAVQRTGNDSVSGLAYDPLNRNLFWADMRQSKIYFASIDTLYTEPPKVLVDLSAEGGRPDGVAVDICRRQLYWTNCKINHATVERIGLNGTGRETIIKQDIDMPRGIVIDQLSDRIFWIDDKVGIFFALESARLDGSDRQLVLKDKHQSPIQLAITEDTIYWTDKADKAVWSYPKPAYNKPATNSSETQPQPTKLASWKDDVYGIVARTGFYQHLQKDAHCASVVRKVKQRLDNKLNNRTHERSAVEERMDALEREHCLNGASYMSRGNFCICPVGYKGARCEISECHNFCVHGTCEISDMGYPKCYCQEDFYGERCEYYKCNGHCLNDGHCLVDKESGELSCDCRENFTGTRCEHNETAHCASYCQHLKQHPDAFVPASCVDICEELHLSNGTIVTEYQAAAPLCADGPSSLRSGSVIIVLVVGIVSSLALVAVIVHGLRLIYKPKRPRIKKTFVVRKQARLNSASDTPLTNRPLATEQCEITIENCCNMNICETPCFDPKLVEQQFAARDRKSPCVKEDKKILIHNMEDDLLT</sequence>
<name>CUE_DROVI</name>
<protein>
    <recommendedName>
        <fullName evidence="1">Protein cueball</fullName>
    </recommendedName>
</protein>
<proteinExistence type="inferred from homology"/>
<dbReference type="EMBL" id="CH940647">
    <property type="protein sequence ID" value="EDW68835.1"/>
    <property type="molecule type" value="Genomic_DNA"/>
</dbReference>
<dbReference type="RefSeq" id="XP_002046493.1">
    <property type="nucleotide sequence ID" value="XM_002046457.4"/>
</dbReference>
<dbReference type="SMR" id="B4LCX4"/>
<dbReference type="FunCoup" id="B4LCX4">
    <property type="interactions" value="158"/>
</dbReference>
<dbReference type="STRING" id="7244.B4LCX4"/>
<dbReference type="GlyCosmos" id="B4LCX4">
    <property type="glycosylation" value="8 sites, No reported glycans"/>
</dbReference>
<dbReference type="EnsemblMetazoa" id="FBtr0228390">
    <property type="protein sequence ID" value="FBpp0226882"/>
    <property type="gene ID" value="FBgn0199707"/>
</dbReference>
<dbReference type="EnsemblMetazoa" id="XM_002046457.3">
    <property type="protein sequence ID" value="XP_002046493.1"/>
    <property type="gene ID" value="LOC6622899"/>
</dbReference>
<dbReference type="GeneID" id="6622899"/>
<dbReference type="KEGG" id="dvi:6622899"/>
<dbReference type="CTD" id="38174"/>
<dbReference type="eggNOG" id="KOG1215">
    <property type="taxonomic scope" value="Eukaryota"/>
</dbReference>
<dbReference type="HOGENOM" id="CLU_026602_0_0_1"/>
<dbReference type="InParanoid" id="B4LCX4"/>
<dbReference type="OMA" id="RCEQNST"/>
<dbReference type="OrthoDB" id="382013at2759"/>
<dbReference type="PhylomeDB" id="B4LCX4"/>
<dbReference type="Proteomes" id="UP000008792">
    <property type="component" value="Unassembled WGS sequence"/>
</dbReference>
<dbReference type="GO" id="GO:0005886">
    <property type="term" value="C:plasma membrane"/>
    <property type="evidence" value="ECO:0007669"/>
    <property type="project" value="UniProtKB-SubCell"/>
</dbReference>
<dbReference type="GO" id="GO:0042813">
    <property type="term" value="F:Wnt receptor activity"/>
    <property type="evidence" value="ECO:0007669"/>
    <property type="project" value="TreeGrafter"/>
</dbReference>
<dbReference type="GO" id="GO:0017147">
    <property type="term" value="F:Wnt-protein binding"/>
    <property type="evidence" value="ECO:0007669"/>
    <property type="project" value="TreeGrafter"/>
</dbReference>
<dbReference type="GO" id="GO:0048513">
    <property type="term" value="P:animal organ development"/>
    <property type="evidence" value="ECO:0007669"/>
    <property type="project" value="UniProtKB-ARBA"/>
</dbReference>
<dbReference type="GO" id="GO:0060070">
    <property type="term" value="P:canonical Wnt signaling pathway"/>
    <property type="evidence" value="ECO:0007669"/>
    <property type="project" value="TreeGrafter"/>
</dbReference>
<dbReference type="GO" id="GO:0048477">
    <property type="term" value="P:oogenesis"/>
    <property type="evidence" value="ECO:0007669"/>
    <property type="project" value="UniProtKB-KW"/>
</dbReference>
<dbReference type="GO" id="GO:0045938">
    <property type="term" value="P:positive regulation of circadian sleep/wake cycle, sleep"/>
    <property type="evidence" value="ECO:0007669"/>
    <property type="project" value="EnsemblMetazoa"/>
</dbReference>
<dbReference type="GO" id="GO:0007283">
    <property type="term" value="P:spermatogenesis"/>
    <property type="evidence" value="ECO:0007669"/>
    <property type="project" value="UniProtKB-KW"/>
</dbReference>
<dbReference type="GO" id="GO:0048731">
    <property type="term" value="P:system development"/>
    <property type="evidence" value="ECO:0007669"/>
    <property type="project" value="UniProtKB-ARBA"/>
</dbReference>
<dbReference type="GO" id="GO:0070328">
    <property type="term" value="P:triglyceride homeostasis"/>
    <property type="evidence" value="ECO:0007669"/>
    <property type="project" value="EnsemblMetazoa"/>
</dbReference>
<dbReference type="CDD" id="cd00055">
    <property type="entry name" value="EGF_Lam"/>
    <property type="match status" value="1"/>
</dbReference>
<dbReference type="Gene3D" id="2.10.25.10">
    <property type="entry name" value="Laminin"/>
    <property type="match status" value="2"/>
</dbReference>
<dbReference type="Gene3D" id="2.120.10.30">
    <property type="entry name" value="TolB, C-terminal domain"/>
    <property type="match status" value="1"/>
</dbReference>
<dbReference type="InterPro" id="IPR011042">
    <property type="entry name" value="6-blade_b-propeller_TolB-like"/>
</dbReference>
<dbReference type="InterPro" id="IPR050778">
    <property type="entry name" value="Cueball_EGF_LRP_Nidogen"/>
</dbReference>
<dbReference type="InterPro" id="IPR000742">
    <property type="entry name" value="EGF-like_dom"/>
</dbReference>
<dbReference type="InterPro" id="IPR000033">
    <property type="entry name" value="LDLR_classB_rpt"/>
</dbReference>
<dbReference type="InterPro" id="IPR002049">
    <property type="entry name" value="LE_dom"/>
</dbReference>
<dbReference type="PANTHER" id="PTHR46513:SF42">
    <property type="entry name" value="PROTEIN CUEBALL"/>
    <property type="match status" value="1"/>
</dbReference>
<dbReference type="PANTHER" id="PTHR46513">
    <property type="entry name" value="VITELLOGENIN RECEPTOR-LIKE PROTEIN-RELATED-RELATED"/>
    <property type="match status" value="1"/>
</dbReference>
<dbReference type="Pfam" id="PF00058">
    <property type="entry name" value="Ldl_recept_b"/>
    <property type="match status" value="1"/>
</dbReference>
<dbReference type="SMART" id="SM00181">
    <property type="entry name" value="EGF"/>
    <property type="match status" value="3"/>
</dbReference>
<dbReference type="SMART" id="SM00135">
    <property type="entry name" value="LY"/>
    <property type="match status" value="3"/>
</dbReference>
<dbReference type="SUPFAM" id="SSF57196">
    <property type="entry name" value="EGF/Laminin"/>
    <property type="match status" value="2"/>
</dbReference>
<dbReference type="SUPFAM" id="SSF63825">
    <property type="entry name" value="YWTD domain"/>
    <property type="match status" value="1"/>
</dbReference>
<dbReference type="PROSITE" id="PS00022">
    <property type="entry name" value="EGF_1"/>
    <property type="match status" value="3"/>
</dbReference>
<dbReference type="PROSITE" id="PS01186">
    <property type="entry name" value="EGF_2"/>
    <property type="match status" value="1"/>
</dbReference>
<dbReference type="PROSITE" id="PS50026">
    <property type="entry name" value="EGF_3"/>
    <property type="match status" value="2"/>
</dbReference>
<dbReference type="PROSITE" id="PS51120">
    <property type="entry name" value="LDLRB"/>
    <property type="match status" value="3"/>
</dbReference>
<reference evidence="5" key="1">
    <citation type="journal article" date="2007" name="Nature">
        <title>Evolution of genes and genomes on the Drosophila phylogeny.</title>
        <authorList>
            <consortium name="Drosophila 12 genomes consortium"/>
        </authorList>
    </citation>
    <scope>NUCLEOTIDE SEQUENCE [LARGE SCALE GENOMIC DNA]</scope>
    <source>
        <strain evidence="5">Tucson 15010-1051.87</strain>
    </source>
</reference>
<keyword id="KW-1003">Cell membrane</keyword>
<keyword id="KW-0221">Differentiation</keyword>
<keyword id="KW-1015">Disulfide bond</keyword>
<keyword id="KW-0245">EGF-like domain</keyword>
<keyword id="KW-0325">Glycoprotein</keyword>
<keyword id="KW-0472">Membrane</keyword>
<keyword id="KW-0896">Oogenesis</keyword>
<keyword id="KW-1185">Reference proteome</keyword>
<keyword id="KW-0677">Repeat</keyword>
<keyword id="KW-0732">Signal</keyword>
<keyword id="KW-0744">Spermatogenesis</keyword>
<keyword id="KW-0812">Transmembrane</keyword>
<keyword id="KW-1133">Transmembrane helix</keyword>